<accession>Q9ZUC1</accession>
<accession>Q945P3</accession>
<feature type="transit peptide" description="Chloroplast" evidence="1">
    <location>
        <begin position="1"/>
        <end status="unknown"/>
    </location>
</feature>
<feature type="chain" id="PRO_0000000886" description="NADPH-dependent alkenal/one oxidoreductase, chloroplastic">
    <location>
        <begin status="unknown"/>
        <end position="386"/>
    </location>
</feature>
<protein>
    <recommendedName>
        <fullName evidence="4">NADPH-dependent alkenal/one oxidoreductase, chloroplastic</fullName>
        <shortName evidence="4">AtAOR</shortName>
        <ecNumber evidence="2">1.3.1.-</ecNumber>
    </recommendedName>
</protein>
<comment type="function">
    <text evidence="2 3">Reduces the double bond in short-chain unsaturated carbonyls (PubMed:21169366). Acts preferentially on alpha,beta-unsaturated ketones rather on alpha,beta-unsaturated aldehydes (PubMed:21169366). Has no activity with (E)-2-hexenal and (E)-2-pentenal (PubMed:21169366). Contributes to detoxify stromal reactive carbonyls produced under oxidative stress (PubMed:22575657).</text>
</comment>
<comment type="biophysicochemical properties">
    <kinetics>
        <KM evidence="2">3.5 mM for propenal</KM>
        <KM evidence="2">1.8 mM for butenal</KM>
        <KM evidence="2">0.13 mM for 3-buten-2-one</KM>
        <KM evidence="2">0.29 mM for 1-penten-3-one</KM>
        <KM evidence="2">0.12 mM for 4-hexen-3-one</KM>
        <KM evidence="2">0.01 mM for NADPH with propenal as substrate</KM>
        <KM evidence="2">0.053 mM for NADH with propenal as substrate</KM>
        <text evidence="2">kcat is 22 sec(-1) for propenal. kcat is 1.3 sec(-1) for butenal. kcat is 3.5 sec(-1) for 3-buten-2-one. kcat is 4.0 sec(-1) for 1-penten-3-one. kcat is 3.3 sec(-1) for 4-hexen-3-one. kcat is 23 sec(-1) for NADPH. kcat is 23 sec(-1) for NADH.</text>
    </kinetics>
    <phDependence>
        <text evidence="4">Optimum pH is 6.0-6.5.</text>
    </phDependence>
</comment>
<comment type="subcellular location">
    <subcellularLocation>
        <location evidence="6">Plastid</location>
        <location evidence="6">Chloroplast</location>
    </subcellularLocation>
</comment>
<comment type="disruption phenotype">
    <text evidence="3">No visible phenotype under normal conditions, but enhanced susceptibility to methyl viologen.</text>
</comment>
<comment type="similarity">
    <text evidence="5">Belongs to the zinc-containing alcohol dehydrogenase family. Quinone oxidoreductase subfamily.</text>
</comment>
<comment type="sequence caution" evidence="5">
    <conflict type="erroneous initiation">
        <sequence resource="EMBL-CDS" id="AAC98029"/>
    </conflict>
    <text>Truncated N-terminus.</text>
</comment>
<gene>
    <name evidence="4" type="primary">AOR</name>
    <name evidence="7" type="ordered locus">At1g23740</name>
    <name evidence="8" type="ORF">F5O8.29</name>
</gene>
<organism>
    <name type="scientific">Arabidopsis thaliana</name>
    <name type="common">Mouse-ear cress</name>
    <dbReference type="NCBI Taxonomy" id="3702"/>
    <lineage>
        <taxon>Eukaryota</taxon>
        <taxon>Viridiplantae</taxon>
        <taxon>Streptophyta</taxon>
        <taxon>Embryophyta</taxon>
        <taxon>Tracheophyta</taxon>
        <taxon>Spermatophyta</taxon>
        <taxon>Magnoliopsida</taxon>
        <taxon>eudicotyledons</taxon>
        <taxon>Gunneridae</taxon>
        <taxon>Pentapetalae</taxon>
        <taxon>rosids</taxon>
        <taxon>malvids</taxon>
        <taxon>Brassicales</taxon>
        <taxon>Brassicaceae</taxon>
        <taxon>Camelineae</taxon>
        <taxon>Arabidopsis</taxon>
    </lineage>
</organism>
<reference key="1">
    <citation type="journal article" date="2000" name="Nature">
        <title>Sequence and analysis of chromosome 1 of the plant Arabidopsis thaliana.</title>
        <authorList>
            <person name="Theologis A."/>
            <person name="Ecker J.R."/>
            <person name="Palm C.J."/>
            <person name="Federspiel N.A."/>
            <person name="Kaul S."/>
            <person name="White O."/>
            <person name="Alonso J."/>
            <person name="Altafi H."/>
            <person name="Araujo R."/>
            <person name="Bowman C.L."/>
            <person name="Brooks S.Y."/>
            <person name="Buehler E."/>
            <person name="Chan A."/>
            <person name="Chao Q."/>
            <person name="Chen H."/>
            <person name="Cheuk R.F."/>
            <person name="Chin C.W."/>
            <person name="Chung M.K."/>
            <person name="Conn L."/>
            <person name="Conway A.B."/>
            <person name="Conway A.R."/>
            <person name="Creasy T.H."/>
            <person name="Dewar K."/>
            <person name="Dunn P."/>
            <person name="Etgu P."/>
            <person name="Feldblyum T.V."/>
            <person name="Feng J.-D."/>
            <person name="Fong B."/>
            <person name="Fujii C.Y."/>
            <person name="Gill J.E."/>
            <person name="Goldsmith A.D."/>
            <person name="Haas B."/>
            <person name="Hansen N.F."/>
            <person name="Hughes B."/>
            <person name="Huizar L."/>
            <person name="Hunter J.L."/>
            <person name="Jenkins J."/>
            <person name="Johnson-Hopson C."/>
            <person name="Khan S."/>
            <person name="Khaykin E."/>
            <person name="Kim C.J."/>
            <person name="Koo H.L."/>
            <person name="Kremenetskaia I."/>
            <person name="Kurtz D.B."/>
            <person name="Kwan A."/>
            <person name="Lam B."/>
            <person name="Langin-Hooper S."/>
            <person name="Lee A."/>
            <person name="Lee J.M."/>
            <person name="Lenz C.A."/>
            <person name="Li J.H."/>
            <person name="Li Y.-P."/>
            <person name="Lin X."/>
            <person name="Liu S.X."/>
            <person name="Liu Z.A."/>
            <person name="Luros J.S."/>
            <person name="Maiti R."/>
            <person name="Marziali A."/>
            <person name="Militscher J."/>
            <person name="Miranda M."/>
            <person name="Nguyen M."/>
            <person name="Nierman W.C."/>
            <person name="Osborne B.I."/>
            <person name="Pai G."/>
            <person name="Peterson J."/>
            <person name="Pham P.K."/>
            <person name="Rizzo M."/>
            <person name="Rooney T."/>
            <person name="Rowley D."/>
            <person name="Sakano H."/>
            <person name="Salzberg S.L."/>
            <person name="Schwartz J.R."/>
            <person name="Shinn P."/>
            <person name="Southwick A.M."/>
            <person name="Sun H."/>
            <person name="Tallon L.J."/>
            <person name="Tambunga G."/>
            <person name="Toriumi M.J."/>
            <person name="Town C.D."/>
            <person name="Utterback T."/>
            <person name="Van Aken S."/>
            <person name="Vaysberg M."/>
            <person name="Vysotskaia V.S."/>
            <person name="Walker M."/>
            <person name="Wu D."/>
            <person name="Yu G."/>
            <person name="Fraser C.M."/>
            <person name="Venter J.C."/>
            <person name="Davis R.W."/>
        </authorList>
    </citation>
    <scope>NUCLEOTIDE SEQUENCE [LARGE SCALE GENOMIC DNA]</scope>
    <source>
        <strain>cv. Columbia</strain>
    </source>
</reference>
<reference key="2">
    <citation type="journal article" date="2017" name="Plant J.">
        <title>Araport11: a complete reannotation of the Arabidopsis thaliana reference genome.</title>
        <authorList>
            <person name="Cheng C.Y."/>
            <person name="Krishnakumar V."/>
            <person name="Chan A.P."/>
            <person name="Thibaud-Nissen F."/>
            <person name="Schobel S."/>
            <person name="Town C.D."/>
        </authorList>
    </citation>
    <scope>GENOME REANNOTATION</scope>
    <source>
        <strain>cv. Columbia</strain>
    </source>
</reference>
<reference key="3">
    <citation type="journal article" date="2003" name="Science">
        <title>Empirical analysis of transcriptional activity in the Arabidopsis genome.</title>
        <authorList>
            <person name="Yamada K."/>
            <person name="Lim J."/>
            <person name="Dale J.M."/>
            <person name="Chen H."/>
            <person name="Shinn P."/>
            <person name="Palm C.J."/>
            <person name="Southwick A.M."/>
            <person name="Wu H.C."/>
            <person name="Kim C.J."/>
            <person name="Nguyen M."/>
            <person name="Pham P.K."/>
            <person name="Cheuk R.F."/>
            <person name="Karlin-Newmann G."/>
            <person name="Liu S.X."/>
            <person name="Lam B."/>
            <person name="Sakano H."/>
            <person name="Wu T."/>
            <person name="Yu G."/>
            <person name="Miranda M."/>
            <person name="Quach H.L."/>
            <person name="Tripp M."/>
            <person name="Chang C.H."/>
            <person name="Lee J.M."/>
            <person name="Toriumi M.J."/>
            <person name="Chan M.M."/>
            <person name="Tang C.C."/>
            <person name="Onodera C.S."/>
            <person name="Deng J.M."/>
            <person name="Akiyama K."/>
            <person name="Ansari Y."/>
            <person name="Arakawa T."/>
            <person name="Banh J."/>
            <person name="Banno F."/>
            <person name="Bowser L."/>
            <person name="Brooks S.Y."/>
            <person name="Carninci P."/>
            <person name="Chao Q."/>
            <person name="Choy N."/>
            <person name="Enju A."/>
            <person name="Goldsmith A.D."/>
            <person name="Gurjal M."/>
            <person name="Hansen N.F."/>
            <person name="Hayashizaki Y."/>
            <person name="Johnson-Hopson C."/>
            <person name="Hsuan V.W."/>
            <person name="Iida K."/>
            <person name="Karnes M."/>
            <person name="Khan S."/>
            <person name="Koesema E."/>
            <person name="Ishida J."/>
            <person name="Jiang P.X."/>
            <person name="Jones T."/>
            <person name="Kawai J."/>
            <person name="Kamiya A."/>
            <person name="Meyers C."/>
            <person name="Nakajima M."/>
            <person name="Narusaka M."/>
            <person name="Seki M."/>
            <person name="Sakurai T."/>
            <person name="Satou M."/>
            <person name="Tamse R."/>
            <person name="Vaysberg M."/>
            <person name="Wallender E.K."/>
            <person name="Wong C."/>
            <person name="Yamamura Y."/>
            <person name="Yuan S."/>
            <person name="Shinozaki K."/>
            <person name="Davis R.W."/>
            <person name="Theologis A."/>
            <person name="Ecker J.R."/>
        </authorList>
    </citation>
    <scope>NUCLEOTIDE SEQUENCE [LARGE SCALE MRNA]</scope>
    <source>
        <strain>cv. Columbia</strain>
    </source>
</reference>
<reference key="4">
    <citation type="journal article" date="2011" name="J. Biol. Chem.">
        <title>NADPH-dependent reductases involved in the detoxification of reactive carbonyls in plants.</title>
        <authorList>
            <person name="Yamauchi Y."/>
            <person name="Hasegawa A."/>
            <person name="Taninaka A."/>
            <person name="Mizutani M."/>
            <person name="Sugimoto Y."/>
        </authorList>
    </citation>
    <scope>FUNCTION</scope>
    <scope>CATALYTIC ACTIVITY</scope>
    <scope>BIOPHYSICOCHEMICAL PROPERTIES</scope>
    <scope>SUBSTRATE SPECIFICITY</scope>
</reference>
<reference key="5">
    <citation type="journal article" date="2012" name="FEBS Lett.">
        <title>Chloroplastic NADPH-dependent alkenal/one oxidoreductase contributes to the detoxification of reactive carbonyls produced under oxidative stress.</title>
        <authorList>
            <person name="Yamauchi Y."/>
            <person name="Hasegawa A."/>
            <person name="Mizutani M."/>
            <person name="Sugimoto Y."/>
        </authorList>
    </citation>
    <scope>FUNCTION</scope>
    <scope>DISRUPTION PHENOTYPE</scope>
</reference>
<proteinExistence type="evidence at protein level"/>
<sequence>MNAALATTTATTPVLRRETPLLHYCSLTTKSPVYQINRVRFGSCVQTVSKKFLKISASSQSASAAVNVTADASIPKEMKAWVYSDYGGVDVLKLESNIVVPEIKEDQVLIKVVAAALNPVDAKRRQGKFKATDSPLPTVPGYDVAGVVVKVGSAVKDLKEGDEVYANVSEKALEGPKQFGSLAEYTAVEEKLLALKPKNIDFAQAAGLPLAIETADEGLVRTEFSAGKSILVLNGAGGVGSLVIQLAKHVYGASKVAATASTEKLELVRSLGADLAIDYTKENIEDLPDKYDVVFDAIGMCDKAVKVIKEGGKVVALTGAVTPPGFRFVVTSNGDVLKKLNPYIESGKVKPVVDPKGPFPFSRVADAFSYLETNHATGKVVVYPIP</sequence>
<name>AOR_ARATH</name>
<evidence type="ECO:0000255" key="1"/>
<evidence type="ECO:0000269" key="2">
    <source>
    </source>
</evidence>
<evidence type="ECO:0000269" key="3">
    <source>
    </source>
</evidence>
<evidence type="ECO:0000303" key="4">
    <source>
    </source>
</evidence>
<evidence type="ECO:0000305" key="5"/>
<evidence type="ECO:0000305" key="6">
    <source>
    </source>
</evidence>
<evidence type="ECO:0000312" key="7">
    <source>
        <dbReference type="Araport" id="AT1G23740"/>
    </source>
</evidence>
<evidence type="ECO:0000312" key="8">
    <source>
        <dbReference type="EMBL" id="AAC98029.1"/>
    </source>
</evidence>
<keyword id="KW-0150">Chloroplast</keyword>
<keyword id="KW-0520">NAD</keyword>
<keyword id="KW-0560">Oxidoreductase</keyword>
<keyword id="KW-0934">Plastid</keyword>
<keyword id="KW-1185">Reference proteome</keyword>
<keyword id="KW-0809">Transit peptide</keyword>
<dbReference type="EC" id="1.3.1.-" evidence="2"/>
<dbReference type="EMBL" id="AC005990">
    <property type="protein sequence ID" value="AAC98029.1"/>
    <property type="status" value="ALT_INIT"/>
    <property type="molecule type" value="Genomic_DNA"/>
</dbReference>
<dbReference type="EMBL" id="CP002684">
    <property type="protein sequence ID" value="AEE30427.1"/>
    <property type="molecule type" value="Genomic_DNA"/>
</dbReference>
<dbReference type="EMBL" id="AF411799">
    <property type="protein sequence ID" value="AAL06488.1"/>
    <property type="molecule type" value="mRNA"/>
</dbReference>
<dbReference type="EMBL" id="AY094032">
    <property type="protein sequence ID" value="AAM16188.1"/>
    <property type="molecule type" value="mRNA"/>
</dbReference>
<dbReference type="PIR" id="E86371">
    <property type="entry name" value="E86371"/>
</dbReference>
<dbReference type="RefSeq" id="NP_173786.1">
    <property type="nucleotide sequence ID" value="NM_102222.5"/>
</dbReference>
<dbReference type="SMR" id="Q9ZUC1"/>
<dbReference type="FunCoup" id="Q9ZUC1">
    <property type="interactions" value="575"/>
</dbReference>
<dbReference type="STRING" id="3702.Q9ZUC1"/>
<dbReference type="GlyGen" id="Q9ZUC1">
    <property type="glycosylation" value="1 site"/>
</dbReference>
<dbReference type="iPTMnet" id="Q9ZUC1"/>
<dbReference type="PaxDb" id="3702-AT1G23740.1"/>
<dbReference type="ProteomicsDB" id="244974"/>
<dbReference type="EnsemblPlants" id="AT1G23740.1">
    <property type="protein sequence ID" value="AT1G23740.1"/>
    <property type="gene ID" value="AT1G23740"/>
</dbReference>
<dbReference type="GeneID" id="838984"/>
<dbReference type="Gramene" id="AT1G23740.1">
    <property type="protein sequence ID" value="AT1G23740.1"/>
    <property type="gene ID" value="AT1G23740"/>
</dbReference>
<dbReference type="KEGG" id="ath:AT1G23740"/>
<dbReference type="Araport" id="AT1G23740"/>
<dbReference type="TAIR" id="AT1G23740">
    <property type="gene designation" value="AOR"/>
</dbReference>
<dbReference type="eggNOG" id="KOG1198">
    <property type="taxonomic scope" value="Eukaryota"/>
</dbReference>
<dbReference type="HOGENOM" id="CLU_026673_3_3_1"/>
<dbReference type="InParanoid" id="Q9ZUC1"/>
<dbReference type="OMA" id="TSWQALK"/>
<dbReference type="PhylomeDB" id="Q9ZUC1"/>
<dbReference type="BioCyc" id="ARA:AT1G23740-MONOMER"/>
<dbReference type="BioCyc" id="MetaCyc:AT1G23740-MONOMER"/>
<dbReference type="BRENDA" id="1.3.1.102">
    <property type="organism ID" value="399"/>
</dbReference>
<dbReference type="SABIO-RK" id="Q9ZUC1"/>
<dbReference type="CD-CODE" id="4299E36E">
    <property type="entry name" value="Nucleolus"/>
</dbReference>
<dbReference type="PRO" id="PR:Q9ZUC1"/>
<dbReference type="Proteomes" id="UP000006548">
    <property type="component" value="Chromosome 1"/>
</dbReference>
<dbReference type="ExpressionAtlas" id="Q9ZUC1">
    <property type="expression patterns" value="baseline and differential"/>
</dbReference>
<dbReference type="GO" id="GO:0048046">
    <property type="term" value="C:apoplast"/>
    <property type="evidence" value="ECO:0007005"/>
    <property type="project" value="TAIR"/>
</dbReference>
<dbReference type="GO" id="GO:0009507">
    <property type="term" value="C:chloroplast"/>
    <property type="evidence" value="ECO:0007005"/>
    <property type="project" value="TAIR"/>
</dbReference>
<dbReference type="GO" id="GO:0009941">
    <property type="term" value="C:chloroplast envelope"/>
    <property type="evidence" value="ECO:0007005"/>
    <property type="project" value="TAIR"/>
</dbReference>
<dbReference type="GO" id="GO:0009570">
    <property type="term" value="C:chloroplast stroma"/>
    <property type="evidence" value="ECO:0007005"/>
    <property type="project" value="TAIR"/>
</dbReference>
<dbReference type="GO" id="GO:0005634">
    <property type="term" value="C:nucleus"/>
    <property type="evidence" value="ECO:0007005"/>
    <property type="project" value="TAIR"/>
</dbReference>
<dbReference type="GO" id="GO:0010319">
    <property type="term" value="C:stromule"/>
    <property type="evidence" value="ECO:0000314"/>
    <property type="project" value="TAIR"/>
</dbReference>
<dbReference type="GO" id="GO:0009579">
    <property type="term" value="C:thylakoid"/>
    <property type="evidence" value="ECO:0007005"/>
    <property type="project" value="TAIR"/>
</dbReference>
<dbReference type="GO" id="GO:0035798">
    <property type="term" value="F:2-alkenal reductase (NADPH) activity"/>
    <property type="evidence" value="ECO:0000314"/>
    <property type="project" value="TAIR"/>
</dbReference>
<dbReference type="GO" id="GO:0035671">
    <property type="term" value="F:enone reductase activity"/>
    <property type="evidence" value="ECO:0000314"/>
    <property type="project" value="TAIR"/>
</dbReference>
<dbReference type="GO" id="GO:0008270">
    <property type="term" value="F:zinc ion binding"/>
    <property type="evidence" value="ECO:0007669"/>
    <property type="project" value="InterPro"/>
</dbReference>
<dbReference type="GO" id="GO:0009409">
    <property type="term" value="P:response to cold"/>
    <property type="evidence" value="ECO:0000270"/>
    <property type="project" value="TAIR"/>
</dbReference>
<dbReference type="CDD" id="cd05289">
    <property type="entry name" value="MDR_like_2"/>
    <property type="match status" value="1"/>
</dbReference>
<dbReference type="Gene3D" id="3.90.180.10">
    <property type="entry name" value="Medium-chain alcohol dehydrogenases, catalytic domain"/>
    <property type="match status" value="1"/>
</dbReference>
<dbReference type="Gene3D" id="3.40.50.720">
    <property type="entry name" value="NAD(P)-binding Rossmann-like Domain"/>
    <property type="match status" value="1"/>
</dbReference>
<dbReference type="InterPro" id="IPR013154">
    <property type="entry name" value="ADH-like_N"/>
</dbReference>
<dbReference type="InterPro" id="IPR044626">
    <property type="entry name" value="AOR-like"/>
</dbReference>
<dbReference type="InterPro" id="IPR011032">
    <property type="entry name" value="GroES-like_sf"/>
</dbReference>
<dbReference type="InterPro" id="IPR036291">
    <property type="entry name" value="NAD(P)-bd_dom_sf"/>
</dbReference>
<dbReference type="InterPro" id="IPR020843">
    <property type="entry name" value="PKS_ER"/>
</dbReference>
<dbReference type="InterPro" id="IPR002364">
    <property type="entry name" value="Quin_OxRdtase/zeta-crystal_CS"/>
</dbReference>
<dbReference type="PANTHER" id="PTHR44573">
    <property type="entry name" value="NADPH-DEPENDENT ALKENAL/ONE OXIDOREDUCTASE, CHLOROPLASTIC"/>
    <property type="match status" value="1"/>
</dbReference>
<dbReference type="PANTHER" id="PTHR44573:SF1">
    <property type="entry name" value="NADPH-DEPENDENT ALKENAL_ONE OXIDOREDUCTASE, CHLOROPLASTIC"/>
    <property type="match status" value="1"/>
</dbReference>
<dbReference type="Pfam" id="PF08240">
    <property type="entry name" value="ADH_N"/>
    <property type="match status" value="1"/>
</dbReference>
<dbReference type="Pfam" id="PF13602">
    <property type="entry name" value="ADH_zinc_N_2"/>
    <property type="match status" value="1"/>
</dbReference>
<dbReference type="SMART" id="SM00829">
    <property type="entry name" value="PKS_ER"/>
    <property type="match status" value="1"/>
</dbReference>
<dbReference type="SUPFAM" id="SSF50129">
    <property type="entry name" value="GroES-like"/>
    <property type="match status" value="1"/>
</dbReference>
<dbReference type="SUPFAM" id="SSF51735">
    <property type="entry name" value="NAD(P)-binding Rossmann-fold domains"/>
    <property type="match status" value="1"/>
</dbReference>
<dbReference type="PROSITE" id="PS01162">
    <property type="entry name" value="QOR_ZETA_CRYSTAL"/>
    <property type="match status" value="1"/>
</dbReference>